<proteinExistence type="inferred from homology"/>
<sequence length="251" mass="28499">MLKGHLHSVESLGTVDGPGLRYILFTQGCLLRCLYCHNPDTWKISEPSREVTVDEMVNEILPYKPYFDASGGGVTVSGGEPLLQMPFLEKLFAELKENGVHTCLDTSAGCANDTKAFQRHFEELQKHTDLILLDIKHIDNDKHIRLTGKPNTHILNFARKLSDMKQPVWIRHVLVPGYSDDKDDLIKLGEFINSLDNVEKFEILPYHQLGVHKWKTLGIAYELEDVEAPDDEAVKAAYRYVNFKGKIPVEL</sequence>
<gene>
    <name type="primary">pflA</name>
    <name type="ordered locus">SAR0218</name>
</gene>
<evidence type="ECO:0000250" key="1"/>
<evidence type="ECO:0000250" key="2">
    <source>
        <dbReference type="UniProtKB" id="P0A9N4"/>
    </source>
</evidence>
<evidence type="ECO:0000255" key="3">
    <source>
        <dbReference type="PROSITE-ProRule" id="PRU01266"/>
    </source>
</evidence>
<evidence type="ECO:0000305" key="4"/>
<comment type="function">
    <text evidence="1">Activation of pyruvate formate-lyase under anaerobic conditions by generation of an organic free radical, using S-adenosylmethionine and reduced flavodoxin as cosubstrates to produce 5'-deoxy-adenosine.</text>
</comment>
<comment type="catalytic activity">
    <reaction>
        <text>glycyl-[formate C-acetyltransferase] + reduced [flavodoxin] + S-adenosyl-L-methionine = glycin-2-yl radical-[formate C-acetyltransferase] + semiquinone [flavodoxin] + 5'-deoxyadenosine + L-methionine + H(+)</text>
        <dbReference type="Rhea" id="RHEA:19225"/>
        <dbReference type="Rhea" id="RHEA-COMP:10622"/>
        <dbReference type="Rhea" id="RHEA-COMP:12190"/>
        <dbReference type="Rhea" id="RHEA-COMP:12191"/>
        <dbReference type="Rhea" id="RHEA-COMP:14480"/>
        <dbReference type="ChEBI" id="CHEBI:15378"/>
        <dbReference type="ChEBI" id="CHEBI:17319"/>
        <dbReference type="ChEBI" id="CHEBI:29947"/>
        <dbReference type="ChEBI" id="CHEBI:32722"/>
        <dbReference type="ChEBI" id="CHEBI:57618"/>
        <dbReference type="ChEBI" id="CHEBI:57844"/>
        <dbReference type="ChEBI" id="CHEBI:59789"/>
        <dbReference type="ChEBI" id="CHEBI:140311"/>
        <dbReference type="EC" id="1.97.1.4"/>
    </reaction>
</comment>
<comment type="cofactor">
    <cofactor evidence="1">
        <name>[4Fe-4S] cluster</name>
        <dbReference type="ChEBI" id="CHEBI:49883"/>
    </cofactor>
    <text evidence="1">Binds 1 [4Fe-4S] cluster. The cluster is coordinated with 3 cysteines and an exchangeable S-adenosyl-L-methionine.</text>
</comment>
<comment type="subcellular location">
    <subcellularLocation>
        <location evidence="1">Cytoplasm</location>
    </subcellularLocation>
</comment>
<comment type="similarity">
    <text evidence="4">Belongs to the organic radical-activating enzymes family.</text>
</comment>
<feature type="chain" id="PRO_0000271714" description="Pyruvate formate-lyase-activating enzyme">
    <location>
        <begin position="1"/>
        <end position="251"/>
    </location>
</feature>
<feature type="domain" description="Radical SAM core" evidence="3">
    <location>
        <begin position="15"/>
        <end position="244"/>
    </location>
</feature>
<feature type="binding site" evidence="2">
    <location>
        <position position="29"/>
    </location>
    <ligand>
        <name>[4Fe-4S] cluster</name>
        <dbReference type="ChEBI" id="CHEBI:49883"/>
        <note>4Fe-4S-S-AdoMet</note>
    </ligand>
</feature>
<feature type="binding site" evidence="2">
    <location>
        <position position="33"/>
    </location>
    <ligand>
        <name>[4Fe-4S] cluster</name>
        <dbReference type="ChEBI" id="CHEBI:49883"/>
        <note>4Fe-4S-S-AdoMet</note>
    </ligand>
</feature>
<feature type="binding site" evidence="2">
    <location>
        <begin position="35"/>
        <end position="37"/>
    </location>
    <ligand>
        <name>S-adenosyl-L-methionine</name>
        <dbReference type="ChEBI" id="CHEBI:59789"/>
    </ligand>
</feature>
<feature type="binding site" evidence="2">
    <location>
        <position position="36"/>
    </location>
    <ligand>
        <name>[4Fe-4S] cluster</name>
        <dbReference type="ChEBI" id="CHEBI:49883"/>
        <note>4Fe-4S-S-AdoMet</note>
    </ligand>
</feature>
<feature type="binding site" evidence="2">
    <location>
        <position position="79"/>
    </location>
    <ligand>
        <name>S-adenosyl-L-methionine</name>
        <dbReference type="ChEBI" id="CHEBI:59789"/>
    </ligand>
</feature>
<feature type="binding site" evidence="2">
    <location>
        <begin position="134"/>
        <end position="136"/>
    </location>
    <ligand>
        <name>S-adenosyl-L-methionine</name>
        <dbReference type="ChEBI" id="CHEBI:59789"/>
    </ligand>
</feature>
<feature type="binding site" evidence="2">
    <location>
        <position position="207"/>
    </location>
    <ligand>
        <name>S-adenosyl-L-methionine</name>
        <dbReference type="ChEBI" id="CHEBI:59789"/>
    </ligand>
</feature>
<dbReference type="EC" id="1.97.1.4"/>
<dbReference type="EMBL" id="BX571856">
    <property type="protein sequence ID" value="CAG39245.1"/>
    <property type="molecule type" value="Genomic_DNA"/>
</dbReference>
<dbReference type="RefSeq" id="WP_000911657.1">
    <property type="nucleotide sequence ID" value="NC_002952.2"/>
</dbReference>
<dbReference type="SMR" id="Q6GK89"/>
<dbReference type="KEGG" id="sar:SAR0218"/>
<dbReference type="HOGENOM" id="CLU_058969_1_1_9"/>
<dbReference type="Proteomes" id="UP000000596">
    <property type="component" value="Chromosome"/>
</dbReference>
<dbReference type="GO" id="GO:0005737">
    <property type="term" value="C:cytoplasm"/>
    <property type="evidence" value="ECO:0007669"/>
    <property type="project" value="UniProtKB-SubCell"/>
</dbReference>
<dbReference type="GO" id="GO:0051539">
    <property type="term" value="F:4 iron, 4 sulfur cluster binding"/>
    <property type="evidence" value="ECO:0007669"/>
    <property type="project" value="UniProtKB-KW"/>
</dbReference>
<dbReference type="GO" id="GO:0043365">
    <property type="term" value="F:[formate-C-acetyltransferase]-activating enzyme activity"/>
    <property type="evidence" value="ECO:0007669"/>
    <property type="project" value="UniProtKB-EC"/>
</dbReference>
<dbReference type="GO" id="GO:0046872">
    <property type="term" value="F:metal ion binding"/>
    <property type="evidence" value="ECO:0007669"/>
    <property type="project" value="UniProtKB-KW"/>
</dbReference>
<dbReference type="GO" id="GO:0006006">
    <property type="term" value="P:glucose metabolic process"/>
    <property type="evidence" value="ECO:0007669"/>
    <property type="project" value="UniProtKB-KW"/>
</dbReference>
<dbReference type="CDD" id="cd01335">
    <property type="entry name" value="Radical_SAM"/>
    <property type="match status" value="1"/>
</dbReference>
<dbReference type="Gene3D" id="3.20.20.70">
    <property type="entry name" value="Aldolase class I"/>
    <property type="match status" value="1"/>
</dbReference>
<dbReference type="InterPro" id="IPR013785">
    <property type="entry name" value="Aldolase_TIM"/>
</dbReference>
<dbReference type="InterPro" id="IPR040074">
    <property type="entry name" value="BssD/PflA/YjjW"/>
</dbReference>
<dbReference type="InterPro" id="IPR034457">
    <property type="entry name" value="Organic_radical-activating"/>
</dbReference>
<dbReference type="InterPro" id="IPR012839">
    <property type="entry name" value="Organic_radical_activase"/>
</dbReference>
<dbReference type="InterPro" id="IPR012838">
    <property type="entry name" value="PFL1_activating"/>
</dbReference>
<dbReference type="InterPro" id="IPR034465">
    <property type="entry name" value="Pyruvate_for-lyase_activase"/>
</dbReference>
<dbReference type="InterPro" id="IPR001989">
    <property type="entry name" value="Radical_activat_CS"/>
</dbReference>
<dbReference type="InterPro" id="IPR007197">
    <property type="entry name" value="rSAM"/>
</dbReference>
<dbReference type="NCBIfam" id="TIGR02493">
    <property type="entry name" value="PFLA"/>
    <property type="match status" value="1"/>
</dbReference>
<dbReference type="PANTHER" id="PTHR30352:SF5">
    <property type="entry name" value="PYRUVATE FORMATE-LYASE 1-ACTIVATING ENZYME"/>
    <property type="match status" value="1"/>
</dbReference>
<dbReference type="PANTHER" id="PTHR30352">
    <property type="entry name" value="PYRUVATE FORMATE-LYASE-ACTIVATING ENZYME"/>
    <property type="match status" value="1"/>
</dbReference>
<dbReference type="Pfam" id="PF13353">
    <property type="entry name" value="Fer4_12"/>
    <property type="match status" value="1"/>
</dbReference>
<dbReference type="Pfam" id="PF04055">
    <property type="entry name" value="Radical_SAM"/>
    <property type="match status" value="1"/>
</dbReference>
<dbReference type="PIRSF" id="PIRSF000371">
    <property type="entry name" value="PFL_act_enz"/>
    <property type="match status" value="1"/>
</dbReference>
<dbReference type="SFLD" id="SFLDG01118">
    <property type="entry name" value="activating_enzymes__group_2"/>
    <property type="match status" value="1"/>
</dbReference>
<dbReference type="SFLD" id="SFLDF00278">
    <property type="entry name" value="pyruvate_formate-lyase_activas"/>
    <property type="match status" value="1"/>
</dbReference>
<dbReference type="SUPFAM" id="SSF102114">
    <property type="entry name" value="Radical SAM enzymes"/>
    <property type="match status" value="1"/>
</dbReference>
<dbReference type="PROSITE" id="PS01087">
    <property type="entry name" value="RADICAL_ACTIVATING"/>
    <property type="match status" value="1"/>
</dbReference>
<dbReference type="PROSITE" id="PS51918">
    <property type="entry name" value="RADICAL_SAM"/>
    <property type="match status" value="1"/>
</dbReference>
<protein>
    <recommendedName>
        <fullName>Pyruvate formate-lyase-activating enzyme</fullName>
        <shortName>PFL-activating enzyme</shortName>
        <ecNumber>1.97.1.4</ecNumber>
    </recommendedName>
</protein>
<accession>Q6GK89</accession>
<organism>
    <name type="scientific">Staphylococcus aureus (strain MRSA252)</name>
    <dbReference type="NCBI Taxonomy" id="282458"/>
    <lineage>
        <taxon>Bacteria</taxon>
        <taxon>Bacillati</taxon>
        <taxon>Bacillota</taxon>
        <taxon>Bacilli</taxon>
        <taxon>Bacillales</taxon>
        <taxon>Staphylococcaceae</taxon>
        <taxon>Staphylococcus</taxon>
    </lineage>
</organism>
<keyword id="KW-0004">4Fe-4S</keyword>
<keyword id="KW-0119">Carbohydrate metabolism</keyword>
<keyword id="KW-0963">Cytoplasm</keyword>
<keyword id="KW-0313">Glucose metabolism</keyword>
<keyword id="KW-0408">Iron</keyword>
<keyword id="KW-0411">Iron-sulfur</keyword>
<keyword id="KW-0479">Metal-binding</keyword>
<keyword id="KW-0560">Oxidoreductase</keyword>
<keyword id="KW-0949">S-adenosyl-L-methionine</keyword>
<name>PFLA_STAAR</name>
<reference key="1">
    <citation type="journal article" date="2004" name="Proc. Natl. Acad. Sci. U.S.A.">
        <title>Complete genomes of two clinical Staphylococcus aureus strains: evidence for the rapid evolution of virulence and drug resistance.</title>
        <authorList>
            <person name="Holden M.T.G."/>
            <person name="Feil E.J."/>
            <person name="Lindsay J.A."/>
            <person name="Peacock S.J."/>
            <person name="Day N.P.J."/>
            <person name="Enright M.C."/>
            <person name="Foster T.J."/>
            <person name="Moore C.E."/>
            <person name="Hurst L."/>
            <person name="Atkin R."/>
            <person name="Barron A."/>
            <person name="Bason N."/>
            <person name="Bentley S.D."/>
            <person name="Chillingworth C."/>
            <person name="Chillingworth T."/>
            <person name="Churcher C."/>
            <person name="Clark L."/>
            <person name="Corton C."/>
            <person name="Cronin A."/>
            <person name="Doggett J."/>
            <person name="Dowd L."/>
            <person name="Feltwell T."/>
            <person name="Hance Z."/>
            <person name="Harris B."/>
            <person name="Hauser H."/>
            <person name="Holroyd S."/>
            <person name="Jagels K."/>
            <person name="James K.D."/>
            <person name="Lennard N."/>
            <person name="Line A."/>
            <person name="Mayes R."/>
            <person name="Moule S."/>
            <person name="Mungall K."/>
            <person name="Ormond D."/>
            <person name="Quail M.A."/>
            <person name="Rabbinowitsch E."/>
            <person name="Rutherford K.M."/>
            <person name="Sanders M."/>
            <person name="Sharp S."/>
            <person name="Simmonds M."/>
            <person name="Stevens K."/>
            <person name="Whitehead S."/>
            <person name="Barrell B.G."/>
            <person name="Spratt B.G."/>
            <person name="Parkhill J."/>
        </authorList>
    </citation>
    <scope>NUCLEOTIDE SEQUENCE [LARGE SCALE GENOMIC DNA]</scope>
    <source>
        <strain>MRSA252</strain>
    </source>
</reference>